<name>EMS1_ARATH</name>
<reference key="1">
    <citation type="journal article" date="2002" name="Curr. Biol.">
        <title>EXS, a putative LRR receptor kinase, regulates male germline cell number and tapetal identity and promotes seed development in Arabidopsis.</title>
        <authorList>
            <person name="Canales C.S."/>
            <person name="Bhatt A.M."/>
            <person name="Scott R.J."/>
            <person name="Dickinson H.G."/>
        </authorList>
    </citation>
    <scope>NUCLEOTIDE SEQUENCE [MRNA]</scope>
    <scope>SUBCELLULAR LOCATION</scope>
    <scope>DEVELOPMENTAL STAGE</scope>
    <scope>MUTAGENESIS OF LEU-4; LYS-104 AND VAL-1185</scope>
    <source>
        <strain>cv. C24</strain>
        <tissue>Flower</tissue>
    </source>
</reference>
<reference key="2">
    <citation type="journal article" date="2002" name="Genes Dev.">
        <title>The EXCESS MICROSPOROCYTES1 gene encodes a putative leucine-rich repeat receptor protein kinase that controls somatic and reproductive cell fates in the Arabidopsis anther.</title>
        <authorList>
            <person name="Zhao D.-Z."/>
            <person name="Wang G.-F."/>
            <person name="Speal B."/>
            <person name="Ma H."/>
        </authorList>
    </citation>
    <scope>NUCLEOTIDE SEQUENCE [MRNA]</scope>
    <scope>SUBCELLULAR LOCATION</scope>
    <scope>DEVELOPMENTAL STAGE</scope>
    <scope>MUTAGENESIS OF LEU-4; LYS-104 AND VAL-1185</scope>
    <source>
        <strain>cv. Landsberg erecta</strain>
    </source>
</reference>
<reference key="3">
    <citation type="journal article" date="2010" name="BMC Genomics">
        <title>Genome-wide cloning and sequence analysis of leucine-rich repeat receptor-like protein kinase genes in Arabidopsis thaliana.</title>
        <authorList>
            <person name="Gou X."/>
            <person name="He K."/>
            <person name="Yang H."/>
            <person name="Yuan T."/>
            <person name="Lin H."/>
            <person name="Clouse S.D."/>
            <person name="Li J."/>
        </authorList>
    </citation>
    <scope>NUCLEOTIDE SEQUENCE [MRNA]</scope>
    <source>
        <strain>cv. Columbia</strain>
    </source>
</reference>
<reference key="4">
    <citation type="journal article" date="2000" name="Nature">
        <title>Sequence and analysis of chromosome 5 of the plant Arabidopsis thaliana.</title>
        <authorList>
            <person name="Tabata S."/>
            <person name="Kaneko T."/>
            <person name="Nakamura Y."/>
            <person name="Kotani H."/>
            <person name="Kato T."/>
            <person name="Asamizu E."/>
            <person name="Miyajima N."/>
            <person name="Sasamoto S."/>
            <person name="Kimura T."/>
            <person name="Hosouchi T."/>
            <person name="Kawashima K."/>
            <person name="Kohara M."/>
            <person name="Matsumoto M."/>
            <person name="Matsuno A."/>
            <person name="Muraki A."/>
            <person name="Nakayama S."/>
            <person name="Nakazaki N."/>
            <person name="Naruo K."/>
            <person name="Okumura S."/>
            <person name="Shinpo S."/>
            <person name="Takeuchi C."/>
            <person name="Wada T."/>
            <person name="Watanabe A."/>
            <person name="Yamada M."/>
            <person name="Yasuda M."/>
            <person name="Sato S."/>
            <person name="de la Bastide M."/>
            <person name="Huang E."/>
            <person name="Spiegel L."/>
            <person name="Gnoj L."/>
            <person name="O'Shaughnessy A."/>
            <person name="Preston R."/>
            <person name="Habermann K."/>
            <person name="Murray J."/>
            <person name="Johnson D."/>
            <person name="Rohlfing T."/>
            <person name="Nelson J."/>
            <person name="Stoneking T."/>
            <person name="Pepin K."/>
            <person name="Spieth J."/>
            <person name="Sekhon M."/>
            <person name="Armstrong J."/>
            <person name="Becker M."/>
            <person name="Belter E."/>
            <person name="Cordum H."/>
            <person name="Cordes M."/>
            <person name="Courtney L."/>
            <person name="Courtney W."/>
            <person name="Dante M."/>
            <person name="Du H."/>
            <person name="Edwards J."/>
            <person name="Fryman J."/>
            <person name="Haakensen B."/>
            <person name="Lamar E."/>
            <person name="Latreille P."/>
            <person name="Leonard S."/>
            <person name="Meyer R."/>
            <person name="Mulvaney E."/>
            <person name="Ozersky P."/>
            <person name="Riley A."/>
            <person name="Strowmatt C."/>
            <person name="Wagner-McPherson C."/>
            <person name="Wollam A."/>
            <person name="Yoakum M."/>
            <person name="Bell M."/>
            <person name="Dedhia N."/>
            <person name="Parnell L."/>
            <person name="Shah R."/>
            <person name="Rodriguez M."/>
            <person name="Hoon See L."/>
            <person name="Vil D."/>
            <person name="Baker J."/>
            <person name="Kirchoff K."/>
            <person name="Toth K."/>
            <person name="King L."/>
            <person name="Bahret A."/>
            <person name="Miller B."/>
            <person name="Marra M.A."/>
            <person name="Martienssen R."/>
            <person name="McCombie W.R."/>
            <person name="Wilson R.K."/>
            <person name="Murphy G."/>
            <person name="Bancroft I."/>
            <person name="Volckaert G."/>
            <person name="Wambutt R."/>
            <person name="Duesterhoeft A."/>
            <person name="Stiekema W."/>
            <person name="Pohl T."/>
            <person name="Entian K.-D."/>
            <person name="Terryn N."/>
            <person name="Hartley N."/>
            <person name="Bent E."/>
            <person name="Johnson S."/>
            <person name="Langham S.-A."/>
            <person name="McCullagh B."/>
            <person name="Robben J."/>
            <person name="Grymonprez B."/>
            <person name="Zimmermann W."/>
            <person name="Ramsperger U."/>
            <person name="Wedler H."/>
            <person name="Balke K."/>
            <person name="Wedler E."/>
            <person name="Peters S."/>
            <person name="van Staveren M."/>
            <person name="Dirkse W."/>
            <person name="Mooijman P."/>
            <person name="Klein Lankhorst R."/>
            <person name="Weitzenegger T."/>
            <person name="Bothe G."/>
            <person name="Rose M."/>
            <person name="Hauf J."/>
            <person name="Berneiser S."/>
            <person name="Hempel S."/>
            <person name="Feldpausch M."/>
            <person name="Lamberth S."/>
            <person name="Villarroel R."/>
            <person name="Gielen J."/>
            <person name="Ardiles W."/>
            <person name="Bents O."/>
            <person name="Lemcke K."/>
            <person name="Kolesov G."/>
            <person name="Mayer K.F.X."/>
            <person name="Rudd S."/>
            <person name="Schoof H."/>
            <person name="Schueller C."/>
            <person name="Zaccaria P."/>
            <person name="Mewes H.-W."/>
            <person name="Bevan M."/>
            <person name="Fransz P.F."/>
        </authorList>
    </citation>
    <scope>NUCLEOTIDE SEQUENCE [LARGE SCALE GENOMIC DNA]</scope>
    <source>
        <strain>cv. Columbia</strain>
    </source>
</reference>
<reference key="5">
    <citation type="journal article" date="2017" name="Plant J.">
        <title>Araport11: a complete reannotation of the Arabidopsis thaliana reference genome.</title>
        <authorList>
            <person name="Cheng C.Y."/>
            <person name="Krishnakumar V."/>
            <person name="Chan A.P."/>
            <person name="Thibaud-Nissen F."/>
            <person name="Schobel S."/>
            <person name="Town C.D."/>
        </authorList>
    </citation>
    <scope>GENOME REANNOTATION</scope>
    <source>
        <strain>cv. Columbia</strain>
    </source>
</reference>
<reference key="6">
    <citation type="journal article" date="2008" name="Proc. Natl. Acad. Sci. U.S.A.">
        <title>Signaling of cell fate determination by the TPD1 small protein and EMS1 receptor kinase.</title>
        <authorList>
            <person name="Jia G."/>
            <person name="Liu X."/>
            <person name="Owen H.A."/>
            <person name="Zhao D."/>
        </authorList>
    </citation>
    <scope>INTERACTION WITH TPD1</scope>
</reference>
<dbReference type="EC" id="2.7.11.1"/>
<dbReference type="EMBL" id="AJ496433">
    <property type="protein sequence ID" value="CAD42912.1"/>
    <property type="molecule type" value="mRNA"/>
</dbReference>
<dbReference type="EMBL" id="AJ488154">
    <property type="protein sequence ID" value="CAD32463.1"/>
    <property type="molecule type" value="mRNA"/>
</dbReference>
<dbReference type="EMBL" id="FJ708773">
    <property type="protein sequence ID" value="ACN59364.1"/>
    <property type="molecule type" value="mRNA"/>
</dbReference>
<dbReference type="EMBL" id="AL163652">
    <property type="protein sequence ID" value="CAB87284.1"/>
    <property type="molecule type" value="Genomic_DNA"/>
</dbReference>
<dbReference type="EMBL" id="CP002688">
    <property type="protein sequence ID" value="AED91132.1"/>
    <property type="molecule type" value="Genomic_DNA"/>
</dbReference>
<dbReference type="PIR" id="T48499">
    <property type="entry name" value="T48499"/>
</dbReference>
<dbReference type="RefSeq" id="NP_196345.1">
    <property type="nucleotide sequence ID" value="NM_120810.3"/>
</dbReference>
<dbReference type="SMR" id="Q9LYN8"/>
<dbReference type="BioGRID" id="15898">
    <property type="interactions" value="29"/>
</dbReference>
<dbReference type="DIP" id="DIP-29701N"/>
<dbReference type="FunCoup" id="Q9LYN8">
    <property type="interactions" value="54"/>
</dbReference>
<dbReference type="IntAct" id="Q9LYN8">
    <property type="interactions" value="27"/>
</dbReference>
<dbReference type="STRING" id="3702.Q9LYN8"/>
<dbReference type="GlyCosmos" id="Q9LYN8">
    <property type="glycosylation" value="12 sites, No reported glycans"/>
</dbReference>
<dbReference type="GlyGen" id="Q9LYN8">
    <property type="glycosylation" value="12 sites"/>
</dbReference>
<dbReference type="iPTMnet" id="Q9LYN8"/>
<dbReference type="PaxDb" id="3702-AT5G07280.1"/>
<dbReference type="ProteomicsDB" id="224428"/>
<dbReference type="EnsemblPlants" id="AT5G07280.1">
    <property type="protein sequence ID" value="AT5G07280.1"/>
    <property type="gene ID" value="AT5G07280"/>
</dbReference>
<dbReference type="GeneID" id="830619"/>
<dbReference type="Gramene" id="AT5G07280.1">
    <property type="protein sequence ID" value="AT5G07280.1"/>
    <property type="gene ID" value="AT5G07280"/>
</dbReference>
<dbReference type="KEGG" id="ath:AT5G07280"/>
<dbReference type="Araport" id="AT5G07280"/>
<dbReference type="TAIR" id="AT5G07280">
    <property type="gene designation" value="EMS1"/>
</dbReference>
<dbReference type="eggNOG" id="ENOG502QRD1">
    <property type="taxonomic scope" value="Eukaryota"/>
</dbReference>
<dbReference type="HOGENOM" id="CLU_000288_22_1_1"/>
<dbReference type="InParanoid" id="Q9LYN8"/>
<dbReference type="OMA" id="QGHREFI"/>
<dbReference type="PhylomeDB" id="Q9LYN8"/>
<dbReference type="PRO" id="PR:Q9LYN8"/>
<dbReference type="Proteomes" id="UP000006548">
    <property type="component" value="Chromosome 5"/>
</dbReference>
<dbReference type="ExpressionAtlas" id="Q9LYN8">
    <property type="expression patterns" value="baseline and differential"/>
</dbReference>
<dbReference type="GO" id="GO:0016020">
    <property type="term" value="C:membrane"/>
    <property type="evidence" value="ECO:0000314"/>
    <property type="project" value="TAIR"/>
</dbReference>
<dbReference type="GO" id="GO:0005886">
    <property type="term" value="C:plasma membrane"/>
    <property type="evidence" value="ECO:0007669"/>
    <property type="project" value="UniProtKB-SubCell"/>
</dbReference>
<dbReference type="GO" id="GO:0005524">
    <property type="term" value="F:ATP binding"/>
    <property type="evidence" value="ECO:0007669"/>
    <property type="project" value="UniProtKB-KW"/>
</dbReference>
<dbReference type="GO" id="GO:0106310">
    <property type="term" value="F:protein serine kinase activity"/>
    <property type="evidence" value="ECO:0007669"/>
    <property type="project" value="RHEA"/>
</dbReference>
<dbReference type="GO" id="GO:0004674">
    <property type="term" value="F:protein serine/threonine kinase activity"/>
    <property type="evidence" value="ECO:0007669"/>
    <property type="project" value="UniProtKB-KW"/>
</dbReference>
<dbReference type="GO" id="GO:0019199">
    <property type="term" value="F:transmembrane receptor protein kinase activity"/>
    <property type="evidence" value="ECO:0000250"/>
    <property type="project" value="TAIR"/>
</dbReference>
<dbReference type="GO" id="GO:0010234">
    <property type="term" value="P:anther wall tapetum cell fate specification"/>
    <property type="evidence" value="ECO:0000315"/>
    <property type="project" value="TAIR"/>
</dbReference>
<dbReference type="GO" id="GO:0009556">
    <property type="term" value="P:microsporogenesis"/>
    <property type="evidence" value="ECO:0000315"/>
    <property type="project" value="TAIR"/>
</dbReference>
<dbReference type="GO" id="GO:0046777">
    <property type="term" value="P:protein autophosphorylation"/>
    <property type="evidence" value="ECO:0000314"/>
    <property type="project" value="TAIR"/>
</dbReference>
<dbReference type="FunFam" id="3.80.10.10:FF:000759">
    <property type="entry name" value="Leucine-rich repeat receptor protein kinase EMS1"/>
    <property type="match status" value="1"/>
</dbReference>
<dbReference type="FunFam" id="3.80.10.10:FF:000784">
    <property type="entry name" value="leucine-rich repeat receptor protein kinase EMS1"/>
    <property type="match status" value="1"/>
</dbReference>
<dbReference type="FunFam" id="1.10.510.10:FF:000309">
    <property type="entry name" value="Leucine-rich repeat receptor-like protein kinase"/>
    <property type="match status" value="1"/>
</dbReference>
<dbReference type="FunFam" id="3.80.10.10:FF:000095">
    <property type="entry name" value="LRR receptor-like serine/threonine-protein kinase GSO1"/>
    <property type="match status" value="1"/>
</dbReference>
<dbReference type="FunFam" id="3.80.10.10:FF:000400">
    <property type="entry name" value="Nuclear pore complex protein NUP107"/>
    <property type="match status" value="1"/>
</dbReference>
<dbReference type="FunFam" id="3.30.200.20:FF:000150">
    <property type="entry name" value="serine/threonine-protein kinase BRI1-like 2"/>
    <property type="match status" value="1"/>
</dbReference>
<dbReference type="Gene3D" id="3.30.200.20">
    <property type="entry name" value="Phosphorylase Kinase, domain 1"/>
    <property type="match status" value="1"/>
</dbReference>
<dbReference type="Gene3D" id="3.80.10.10">
    <property type="entry name" value="Ribonuclease Inhibitor"/>
    <property type="match status" value="4"/>
</dbReference>
<dbReference type="Gene3D" id="1.10.510.10">
    <property type="entry name" value="Transferase(Phosphotransferase) domain 1"/>
    <property type="match status" value="1"/>
</dbReference>
<dbReference type="InterPro" id="IPR011009">
    <property type="entry name" value="Kinase-like_dom_sf"/>
</dbReference>
<dbReference type="InterPro" id="IPR001611">
    <property type="entry name" value="Leu-rich_rpt"/>
</dbReference>
<dbReference type="InterPro" id="IPR003591">
    <property type="entry name" value="Leu-rich_rpt_typical-subtyp"/>
</dbReference>
<dbReference type="InterPro" id="IPR032675">
    <property type="entry name" value="LRR_dom_sf"/>
</dbReference>
<dbReference type="InterPro" id="IPR013210">
    <property type="entry name" value="LRR_N_plant-typ"/>
</dbReference>
<dbReference type="InterPro" id="IPR000719">
    <property type="entry name" value="Prot_kinase_dom"/>
</dbReference>
<dbReference type="InterPro" id="IPR017441">
    <property type="entry name" value="Protein_kinase_ATP_BS"/>
</dbReference>
<dbReference type="InterPro" id="IPR001245">
    <property type="entry name" value="Ser-Thr/Tyr_kinase_cat_dom"/>
</dbReference>
<dbReference type="InterPro" id="IPR008271">
    <property type="entry name" value="Ser/Thr_kinase_AS"/>
</dbReference>
<dbReference type="PANTHER" id="PTHR27000">
    <property type="entry name" value="LEUCINE-RICH REPEAT RECEPTOR-LIKE PROTEIN KINASE FAMILY PROTEIN-RELATED"/>
    <property type="match status" value="1"/>
</dbReference>
<dbReference type="PANTHER" id="PTHR27000:SF800">
    <property type="entry name" value="OS11G0197000 PROTEIN"/>
    <property type="match status" value="1"/>
</dbReference>
<dbReference type="Pfam" id="PF00560">
    <property type="entry name" value="LRR_1"/>
    <property type="match status" value="12"/>
</dbReference>
<dbReference type="Pfam" id="PF13855">
    <property type="entry name" value="LRR_8"/>
    <property type="match status" value="3"/>
</dbReference>
<dbReference type="Pfam" id="PF08263">
    <property type="entry name" value="LRRNT_2"/>
    <property type="match status" value="1"/>
</dbReference>
<dbReference type="Pfam" id="PF07714">
    <property type="entry name" value="PK_Tyr_Ser-Thr"/>
    <property type="match status" value="1"/>
</dbReference>
<dbReference type="PRINTS" id="PR00019">
    <property type="entry name" value="LEURICHRPT"/>
</dbReference>
<dbReference type="SMART" id="SM00365">
    <property type="entry name" value="LRR_SD22"/>
    <property type="match status" value="8"/>
</dbReference>
<dbReference type="SMART" id="SM00369">
    <property type="entry name" value="LRR_TYP"/>
    <property type="match status" value="14"/>
</dbReference>
<dbReference type="SMART" id="SM00220">
    <property type="entry name" value="S_TKc"/>
    <property type="match status" value="1"/>
</dbReference>
<dbReference type="SUPFAM" id="SSF52058">
    <property type="entry name" value="L domain-like"/>
    <property type="match status" value="2"/>
</dbReference>
<dbReference type="SUPFAM" id="SSF56112">
    <property type="entry name" value="Protein kinase-like (PK-like)"/>
    <property type="match status" value="1"/>
</dbReference>
<dbReference type="SUPFAM" id="SSF52047">
    <property type="entry name" value="RNI-like"/>
    <property type="match status" value="1"/>
</dbReference>
<dbReference type="PROSITE" id="PS00107">
    <property type="entry name" value="PROTEIN_KINASE_ATP"/>
    <property type="match status" value="1"/>
</dbReference>
<dbReference type="PROSITE" id="PS50011">
    <property type="entry name" value="PROTEIN_KINASE_DOM"/>
    <property type="match status" value="1"/>
</dbReference>
<dbReference type="PROSITE" id="PS00108">
    <property type="entry name" value="PROTEIN_KINASE_ST"/>
    <property type="match status" value="1"/>
</dbReference>
<accession>Q9LYN8</accession>
<accession>C0LGS9</accession>
<accession>Q8GSM5</accession>
<keyword id="KW-0067">ATP-binding</keyword>
<keyword id="KW-1003">Cell membrane</keyword>
<keyword id="KW-0325">Glycoprotein</keyword>
<keyword id="KW-0418">Kinase</keyword>
<keyword id="KW-0433">Leucine-rich repeat</keyword>
<keyword id="KW-0469">Meiosis</keyword>
<keyword id="KW-0472">Membrane</keyword>
<keyword id="KW-0547">Nucleotide-binding</keyword>
<keyword id="KW-0597">Phosphoprotein</keyword>
<keyword id="KW-0675">Receptor</keyword>
<keyword id="KW-1185">Reference proteome</keyword>
<keyword id="KW-0677">Repeat</keyword>
<keyword id="KW-0723">Serine/threonine-protein kinase</keyword>
<keyword id="KW-0732">Signal</keyword>
<keyword id="KW-0808">Transferase</keyword>
<keyword id="KW-0812">Transmembrane</keyword>
<keyword id="KW-1133">Transmembrane helix</keyword>
<comment type="function">
    <text>Receptor with a serine/threonine-protein kinase activity required for the specification of the correct number of male archesporial initials and for the subsequent specification of tapetal and middle cell layer identities. In seeds, required for enhancing cell size and the rate of embryonic development.</text>
</comment>
<comment type="catalytic activity">
    <reaction>
        <text>L-seryl-[protein] + ATP = O-phospho-L-seryl-[protein] + ADP + H(+)</text>
        <dbReference type="Rhea" id="RHEA:17989"/>
        <dbReference type="Rhea" id="RHEA-COMP:9863"/>
        <dbReference type="Rhea" id="RHEA-COMP:11604"/>
        <dbReference type="ChEBI" id="CHEBI:15378"/>
        <dbReference type="ChEBI" id="CHEBI:29999"/>
        <dbReference type="ChEBI" id="CHEBI:30616"/>
        <dbReference type="ChEBI" id="CHEBI:83421"/>
        <dbReference type="ChEBI" id="CHEBI:456216"/>
        <dbReference type="EC" id="2.7.11.1"/>
    </reaction>
</comment>
<comment type="catalytic activity">
    <reaction>
        <text>L-threonyl-[protein] + ATP = O-phospho-L-threonyl-[protein] + ADP + H(+)</text>
        <dbReference type="Rhea" id="RHEA:46608"/>
        <dbReference type="Rhea" id="RHEA-COMP:11060"/>
        <dbReference type="Rhea" id="RHEA-COMP:11605"/>
        <dbReference type="ChEBI" id="CHEBI:15378"/>
        <dbReference type="ChEBI" id="CHEBI:30013"/>
        <dbReference type="ChEBI" id="CHEBI:30616"/>
        <dbReference type="ChEBI" id="CHEBI:61977"/>
        <dbReference type="ChEBI" id="CHEBI:456216"/>
        <dbReference type="EC" id="2.7.11.1"/>
    </reaction>
</comment>
<comment type="subunit">
    <text evidence="9">Interacts with TPD1.</text>
</comment>
<comment type="interaction">
    <interactant intactId="EBI-1640748">
        <id>Q9LYN8</id>
    </interactant>
    <interactant intactId="EBI-20651385">
        <id>Q9SH71</id>
        <label>At1g64210</label>
    </interactant>
    <organismsDiffer>false</organismsDiffer>
    <experiments>2</experiments>
</comment>
<comment type="interaction">
    <interactant intactId="EBI-1640748">
        <id>Q9LYN8</id>
    </interactant>
    <interactant intactId="EBI-1640767">
        <id>Q6TLJ2</id>
        <label>TPD1</label>
    </interactant>
    <organismsDiffer>false</organismsDiffer>
    <experiments>4</experiments>
</comment>
<comment type="subcellular location">
    <subcellularLocation>
        <location evidence="7 8">Cell membrane</location>
        <topology evidence="7 8">Single-pass type I membrane protein</topology>
    </subcellularLocation>
</comment>
<comment type="tissue specificity">
    <text>Present in young buds, open flowers and siliques but absent from mature leaves and roots. Strongly expressed in the young organ primordia, and as the anthers and ovules developed, became focused in the microsporangia and in the distal and chalazal regions of the ovule. In cv. Landsberg erecta, only expressed in the anthers of young floral buds.</text>
</comment>
<comment type="developmental stage">
    <text evidence="7 8">Expressed during the differentiation of microsporocytes and tapetal cells. Also expressed in the meiocytes and young pollen grains until pollen mitosis II.</text>
</comment>
<comment type="PTM">
    <text>Autophosphorylates in vitro.</text>
</comment>
<comment type="miscellaneous">
    <text>Some ecotypic variation may occur: in cv. Landsberg erecta, meiocytes of a null mutant fail to undergo cytokinesis while in cv. C24, cytokinesis clearly takes place, with the mutant meiocytes degenerating shortly after the tetrad stage.</text>
</comment>
<comment type="miscellaneous">
    <text>In cv. C24, the gene is expressed in the young ovular primordia, but the protein is not present in these organs.</text>
</comment>
<comment type="similarity">
    <text evidence="4">Belongs to the protein kinase superfamily. Ser/Thr protein kinase family.</text>
</comment>
<evidence type="ECO:0000250" key="1">
    <source>
        <dbReference type="UniProtKB" id="C0LGT6"/>
    </source>
</evidence>
<evidence type="ECO:0000250" key="2">
    <source>
        <dbReference type="UniProtKB" id="O22476"/>
    </source>
</evidence>
<evidence type="ECO:0000255" key="3"/>
<evidence type="ECO:0000255" key="4">
    <source>
        <dbReference type="PROSITE-ProRule" id="PRU00159"/>
    </source>
</evidence>
<evidence type="ECO:0000255" key="5">
    <source>
        <dbReference type="PROSITE-ProRule" id="PRU00498"/>
    </source>
</evidence>
<evidence type="ECO:0000255" key="6">
    <source>
        <dbReference type="PROSITE-ProRule" id="PRU10027"/>
    </source>
</evidence>
<evidence type="ECO:0000269" key="7">
    <source>
    </source>
</evidence>
<evidence type="ECO:0000269" key="8">
    <source>
    </source>
</evidence>
<evidence type="ECO:0000269" key="9">
    <source>
    </source>
</evidence>
<evidence type="ECO:0000303" key="10">
    <source>
    </source>
</evidence>
<evidence type="ECO:0000303" key="11">
    <source>
    </source>
</evidence>
<evidence type="ECO:0000305" key="12"/>
<organism>
    <name type="scientific">Arabidopsis thaliana</name>
    <name type="common">Mouse-ear cress</name>
    <dbReference type="NCBI Taxonomy" id="3702"/>
    <lineage>
        <taxon>Eukaryota</taxon>
        <taxon>Viridiplantae</taxon>
        <taxon>Streptophyta</taxon>
        <taxon>Embryophyta</taxon>
        <taxon>Tracheophyta</taxon>
        <taxon>Spermatophyta</taxon>
        <taxon>Magnoliopsida</taxon>
        <taxon>eudicotyledons</taxon>
        <taxon>Gunneridae</taxon>
        <taxon>Pentapetalae</taxon>
        <taxon>rosids</taxon>
        <taxon>malvids</taxon>
        <taxon>Brassicales</taxon>
        <taxon>Brassicaceae</taxon>
        <taxon>Camelineae</taxon>
        <taxon>Arabidopsis</taxon>
    </lineage>
</organism>
<sequence length="1192" mass="129800">MAFLTALFLFLFFSFSSSAIVDLSSETTSLISFKRSLENPSLLSSWNVSSSASHCDWVGVTCLLGRVNSLSLPSLSLRGQIPKEISSLKNLRELCLAGNQFSGKIPPEIWNLKHLQTLDLSGNSLTGLLPRLLSELPQLLYLDLSDNHFSGSLPPSFFISLPALSSLDVSNNSLSGEIPPEIGKLSNLSNLYMGLNSFSGQIPSEIGNISLLKNFAAPSCFFNGPLPKEISKLKHLAKLDLSYNPLKCSIPKSFGELHNLSILNLVSAELIGLIPPELGNCKSLKSLMLSFNSLSGPLPLELSEIPLLTFSAERNQLSGSLPSWMGKWKVLDSLLLANNRFSGEIPHEIEDCPMLKHLSLASNLLSGSIPRELCGSGSLEAIDLSGNLLSGTIEEVFDGCSSLGELLLTNNQINGSIPEDLWKLPLMALDLDSNNFTGEIPKSLWKSTNLMEFTASYNRLEGYLPAEIGNAASLKRLVLSDNQLTGEIPREIGKLTSLSVLNLNANMFQGKIPVELGDCTSLTTLDLGSNNLQGQIPDKITALAQLQCLVLSYNNLSGSIPSKPSAYFHQIEMPDLSFLQHHGIFDLSYNRLSGPIPEELGECLVLVEISLSNNHLSGEIPASLSRLTNLTILDLSGNALTGSIPKEMGNSLKLQGLNLANNQLNGHIPESFGLLGSLVKLNLTKNKLDGPVPASLGNLKELTHMDLSFNNLSGELSSELSTMEKLVGLYIEQNKFTGEIPSELGNLTQLEYLDVSENLLSGEIPTKICGLPNLEFLNLAKNNLRGEVPSDGVCQDPSKALLSGNKELCGRVVGSDCKIEGTKLRSAWGIAGLMLGFTIIVFVFVFSLRRWAMTKRVKQRDDPERMEESRLKGFVDQNLYFLSGSRSREPLSINIAMFEQPLLKVRLGDIVEATDHFSKKNIIGDGGFGTVYKACLPGEKTVAVKKLSEAKTQGNREFMAEMETLGKVKHPNLVSLLGYCSFSEEKLLVYEYMVNGSLDHWLRNQTGMLEVLDWSKRLKIAVGAARGLAFLHHGFIPHIIHRDIKASNILLDGDFEPKVADFGLARLISACESHVSTVIAGTFGYIPPEYGQSARATTKGDVYSFGVILLELVTGKEPTGPDFKESEGGNLVGWAIQKINQGKAVDVIDPLLVSVALKNSQLRLLQIAMLCLAETPAKRPNMLDVLKALKEI</sequence>
<gene>
    <name evidence="10" type="primary">EMS1</name>
    <name type="synonym">ESP</name>
    <name evidence="11" type="synonym">EXS</name>
    <name type="ordered locus">At5g07280</name>
    <name type="ORF">T28J14.220</name>
</gene>
<protein>
    <recommendedName>
        <fullName evidence="12">Leucine-rich repeat receptor protein kinase EMS1</fullName>
        <ecNumber>2.7.11.1</ecNumber>
    </recommendedName>
    <alternativeName>
        <fullName evidence="10">Protein EXCESS MICROSPOROCYTES 1</fullName>
    </alternativeName>
    <alternativeName>
        <fullName evidence="11">Protein EXTRA SPOROGENOUS CELLS</fullName>
    </alternativeName>
</protein>
<proteinExistence type="evidence at protein level"/>
<feature type="signal peptide" evidence="3">
    <location>
        <begin position="1"/>
        <end position="18"/>
    </location>
</feature>
<feature type="chain" id="PRO_0000024331" description="Leucine-rich repeat receptor protein kinase EMS1">
    <location>
        <begin position="19"/>
        <end position="1192"/>
    </location>
</feature>
<feature type="transmembrane region" description="Helical" evidence="3">
    <location>
        <begin position="828"/>
        <end position="848"/>
    </location>
</feature>
<feature type="repeat" description="LRR 1">
    <location>
        <begin position="64"/>
        <end position="87"/>
    </location>
</feature>
<feature type="repeat" description="LRR 2">
    <location>
        <begin position="90"/>
        <end position="112"/>
    </location>
</feature>
<feature type="repeat" description="LRR 3">
    <location>
        <begin position="114"/>
        <end position="137"/>
    </location>
</feature>
<feature type="repeat" description="LRR 4">
    <location>
        <begin position="138"/>
        <end position="160"/>
    </location>
</feature>
<feature type="repeat" description="LRR 5">
    <location>
        <begin position="163"/>
        <end position="185"/>
    </location>
</feature>
<feature type="repeat" description="LRR 6">
    <location>
        <begin position="187"/>
        <end position="209"/>
    </location>
</feature>
<feature type="repeat" description="LRR 7">
    <location>
        <begin position="235"/>
        <end position="257"/>
    </location>
</feature>
<feature type="repeat" description="LRR 8">
    <location>
        <begin position="259"/>
        <end position="281"/>
    </location>
</feature>
<feature type="repeat" description="LRR 9">
    <location>
        <begin position="283"/>
        <end position="304"/>
    </location>
</feature>
<feature type="repeat" description="LRR 10">
    <location>
        <begin position="330"/>
        <end position="352"/>
    </location>
</feature>
<feature type="repeat" description="LRR 11">
    <location>
        <begin position="354"/>
        <end position="376"/>
    </location>
</feature>
<feature type="repeat" description="LRR 12">
    <location>
        <begin position="378"/>
        <end position="400"/>
    </location>
</feature>
<feature type="repeat" description="LRR 13">
    <location>
        <begin position="402"/>
        <end position="425"/>
    </location>
</feature>
<feature type="repeat" description="LRR 14">
    <location>
        <begin position="426"/>
        <end position="447"/>
    </location>
</feature>
<feature type="repeat" description="LRR 15">
    <location>
        <begin position="449"/>
        <end position="471"/>
    </location>
</feature>
<feature type="repeat" description="LRR 16">
    <location>
        <begin position="473"/>
        <end position="496"/>
    </location>
</feature>
<feature type="repeat" description="LRR 17">
    <location>
        <begin position="497"/>
        <end position="520"/>
    </location>
</feature>
<feature type="repeat" description="LRR 18">
    <location>
        <begin position="521"/>
        <end position="543"/>
    </location>
</feature>
<feature type="repeat" description="LRR 19">
    <location>
        <begin position="545"/>
        <end position="567"/>
    </location>
</feature>
<feature type="repeat" description="LRR 20">
    <location>
        <begin position="581"/>
        <end position="603"/>
    </location>
</feature>
<feature type="repeat" description="LRR 21">
    <location>
        <begin position="605"/>
        <end position="628"/>
    </location>
</feature>
<feature type="repeat" description="LRR 22">
    <location>
        <begin position="629"/>
        <end position="651"/>
    </location>
</feature>
<feature type="repeat" description="LRR 23">
    <location>
        <begin position="653"/>
        <end position="675"/>
    </location>
</feature>
<feature type="repeat" description="LRR 24">
    <location>
        <begin position="677"/>
        <end position="697"/>
    </location>
</feature>
<feature type="repeat" description="LRR 25">
    <location>
        <begin position="701"/>
        <end position="723"/>
    </location>
</feature>
<feature type="repeat" description="LRR 26">
    <location>
        <begin position="725"/>
        <end position="748"/>
    </location>
</feature>
<feature type="repeat" description="LRR 27">
    <location>
        <begin position="749"/>
        <end position="772"/>
    </location>
</feature>
<feature type="repeat" description="LRR 28">
    <location>
        <begin position="773"/>
        <end position="795"/>
    </location>
</feature>
<feature type="domain" description="Protein kinase" evidence="4">
    <location>
        <begin position="917"/>
        <end position="1192"/>
    </location>
</feature>
<feature type="active site" description="Proton acceptor" evidence="4 6">
    <location>
        <position position="1043"/>
    </location>
</feature>
<feature type="binding site" evidence="4">
    <location>
        <begin position="923"/>
        <end position="931"/>
    </location>
    <ligand>
        <name>ATP</name>
        <dbReference type="ChEBI" id="CHEBI:30616"/>
    </ligand>
</feature>
<feature type="binding site" evidence="4">
    <location>
        <position position="945"/>
    </location>
    <ligand>
        <name>ATP</name>
        <dbReference type="ChEBI" id="CHEBI:30616"/>
    </ligand>
</feature>
<feature type="modified residue" description="Phosphothreonine" evidence="2">
    <location>
        <position position="914"/>
    </location>
</feature>
<feature type="modified residue" description="Phosphotyrosine" evidence="2">
    <location>
        <position position="990"/>
    </location>
</feature>
<feature type="modified residue" description="Phosphotyrosine" evidence="1">
    <location>
        <position position="1085"/>
    </location>
</feature>
<feature type="glycosylation site" description="N-linked (GlcNAc...) asparagine" evidence="5">
    <location>
        <position position="47"/>
    </location>
</feature>
<feature type="glycosylation site" description="N-linked (GlcNAc...) asparagine" evidence="5">
    <location>
        <position position="171"/>
    </location>
</feature>
<feature type="glycosylation site" description="N-linked (GlcNAc...) asparagine" evidence="5">
    <location>
        <position position="187"/>
    </location>
</feature>
<feature type="glycosylation site" description="N-linked (GlcNAc...) asparagine" evidence="5">
    <location>
        <position position="208"/>
    </location>
</feature>
<feature type="glycosylation site" description="N-linked (GlcNAc...) asparagine" evidence="5">
    <location>
        <position position="259"/>
    </location>
</feature>
<feature type="glycosylation site" description="N-linked (GlcNAc...) asparagine" evidence="5">
    <location>
        <position position="414"/>
    </location>
</feature>
<feature type="glycosylation site" description="N-linked (GlcNAc...) asparagine" evidence="5">
    <location>
        <position position="435"/>
    </location>
</feature>
<feature type="glycosylation site" description="N-linked (GlcNAc...) asparagine" evidence="5">
    <location>
        <position position="555"/>
    </location>
</feature>
<feature type="glycosylation site" description="N-linked (GlcNAc...) asparagine" evidence="5">
    <location>
        <position position="629"/>
    </location>
</feature>
<feature type="glycosylation site" description="N-linked (GlcNAc...) asparagine" evidence="5">
    <location>
        <position position="682"/>
    </location>
</feature>
<feature type="glycosylation site" description="N-linked (GlcNAc...) asparagine" evidence="5">
    <location>
        <position position="711"/>
    </location>
</feature>
<feature type="glycosylation site" description="N-linked (GlcNAc...) asparagine" evidence="5">
    <location>
        <position position="746"/>
    </location>
</feature>
<feature type="mutagenesis site" description="In rev.1; no effect." evidence="7 8">
    <original>L</original>
    <variation>LIL</variation>
    <location>
        <position position="4"/>
    </location>
</feature>
<feature type="mutagenesis site" description="In rev.2; no effect." evidence="7 8">
    <original>L</original>
    <variation>LSIL</variation>
    <location>
        <position position="4"/>
    </location>
</feature>
<feature type="mutagenesis site" description="In exs-2; male sterility." evidence="7 8">
    <original>K</original>
    <variation>N</variation>
    <location>
        <position position="104"/>
    </location>
</feature>
<feature type="mutagenesis site" description="In exs-1; male sterility." evidence="7 8">
    <original>V</original>
    <variation>E</variation>
    <location>
        <position position="1185"/>
    </location>
</feature>
<feature type="sequence conflict" description="In Ref. 1; CAD42912." evidence="12" ref="1">
    <original>RL</original>
    <variation>SR</variation>
    <location>
        <begin position="131"/>
        <end position="132"/>
    </location>
</feature>
<feature type="sequence conflict" description="In Ref. 1; CAD42912." evidence="12" ref="1">
    <original>Q</original>
    <variation>E</variation>
    <location>
        <position position="138"/>
    </location>
</feature>
<feature type="sequence conflict" description="In Ref. 1; CAD42912." evidence="12" ref="1">
    <original>P</original>
    <variation>L</variation>
    <location>
        <position position="155"/>
    </location>
</feature>
<feature type="sequence conflict" description="In Ref. 1; CAD42912." evidence="12" ref="1">
    <original>I</original>
    <variation>T</variation>
    <location>
        <position position="209"/>
    </location>
</feature>
<feature type="sequence conflict" description="In Ref. 1; CAD42912." evidence="12" ref="1">
    <original>H</original>
    <variation>Q</variation>
    <location>
        <position position="258"/>
    </location>
</feature>
<feature type="sequence conflict" description="In Ref. 1; CAD42912." evidence="12" ref="1">
    <original>L</original>
    <variation>S</variation>
    <location>
        <position position="273"/>
    </location>
</feature>
<feature type="sequence conflict" description="In Ref. 1; CAD42912." evidence="12" ref="1">
    <original>M</original>
    <variation>I</variation>
    <location>
        <position position="325"/>
    </location>
</feature>
<feature type="sequence conflict" description="In Ref. 1; CAD42912." evidence="12" ref="1">
    <original>H</original>
    <variation>R</variation>
    <location>
        <position position="347"/>
    </location>
</feature>
<feature type="sequence conflict" description="In Ref. 1; CAD42912." evidence="12" ref="1">
    <original>E</original>
    <variation>D</variation>
    <location>
        <position position="572"/>
    </location>
</feature>
<feature type="sequence conflict" description="In Ref. 1; CAD42912." evidence="12" ref="1">
    <original>A</original>
    <variation>V</variation>
    <location>
        <position position="852"/>
    </location>
</feature>
<feature type="sequence conflict" description="In Ref. 1; CAD42912." evidence="12" ref="1">
    <original>M</original>
    <variation>I</variation>
    <location>
        <position position="866"/>
    </location>
</feature>
<feature type="sequence conflict" description="In Ref. 1; CAD42912." evidence="12" ref="1">
    <original>V</original>
    <variation>I</variation>
    <location>
        <position position="1075"/>
    </location>
</feature>